<comment type="function">
    <text evidence="1">Has antimicrobial activity against Gram-positive bacteria (C.glutamicum ATCC 13032 (MIC=1.6 uM) and B.subtilis ATCC 23857 (MIC=1.6 uM)) and Gram-negative bacteria (E.coli ATCC 25922 (MIC=12.5 uM) and P.aeruginosa ATCC 27853 (MIC=25.0 uM)). Displays very low activity against the Gram-positive bacteria S.aureus ATCC 9144 (MIC&gt;100 uM).</text>
</comment>
<comment type="subcellular location">
    <subcellularLocation>
        <location evidence="1">Secreted</location>
    </subcellularLocation>
</comment>
<comment type="PTM">
    <text evidence="1">Oxidation likely reduces antimicrobial activity against Gram-positive bacteria and Gram-negative bacteria.</text>
</comment>
<comment type="mass spectrometry"/>
<comment type="mass spectrometry">
    <text>With oxidation at Met-5 and Met-9.</text>
</comment>
<comment type="miscellaneous">
    <text evidence="1">Displays cytotoxic effects on human melanoma cancer cell line A2058 (IC(50)=4.1 uM) and the human fibroblast cell line MRC-5 (IC(50)=7.5 uM).</text>
</comment>
<proteinExistence type="evidence at protein level"/>
<accession>C0HLN6</accession>
<evidence type="ECO:0000269" key="1">
    <source>
    </source>
</evidence>
<evidence type="ECO:0000303" key="2">
    <source>
    </source>
</evidence>
<evidence type="ECO:0000305" key="3"/>
<dbReference type="GO" id="GO:0005576">
    <property type="term" value="C:extracellular region"/>
    <property type="evidence" value="ECO:0007669"/>
    <property type="project" value="UniProtKB-SubCell"/>
</dbReference>
<dbReference type="GO" id="GO:0051715">
    <property type="term" value="P:cytolysis in another organism"/>
    <property type="evidence" value="ECO:0000314"/>
    <property type="project" value="UniProtKB"/>
</dbReference>
<dbReference type="GO" id="GO:0050829">
    <property type="term" value="P:defense response to Gram-negative bacterium"/>
    <property type="evidence" value="ECO:0000314"/>
    <property type="project" value="UniProtKB"/>
</dbReference>
<dbReference type="GO" id="GO:0050830">
    <property type="term" value="P:defense response to Gram-positive bacterium"/>
    <property type="evidence" value="ECO:0000314"/>
    <property type="project" value="UniProtKB"/>
</dbReference>
<reference evidence="3" key="1">
    <citation type="journal article" date="2020" name="Mar. Drugs">
        <title>Isolation and Characterization of Antimicrobial Peptides with Unusual Disulfide Connectivity from the Colonial Ascidian Synoicum turgens.</title>
        <authorList>
            <person name="Hansen I.K.O."/>
            <person name="Isaksson J."/>
            <person name="Poth A.G."/>
            <person name="Hansen K.O."/>
            <person name="Andersen A.J.C."/>
            <person name="Richard C.S.M."/>
            <person name="Blencke H.M."/>
            <person name="Stensvaag K."/>
            <person name="Craik D.J."/>
            <person name="Haug T."/>
        </authorList>
    </citation>
    <scope>PROTEIN SEQUENCE</scope>
    <scope>FUNCTION</scope>
    <scope>SUBCELLULAR LOCATION</scope>
    <scope>MASS SPECTROMETRY</scope>
    <scope>DISULFIDE BONDS</scope>
    <scope>OXIDATION AT MET-5 AND MET-9</scope>
    <scope>AMIDATION AT GLY-35</scope>
</reference>
<keyword id="KW-0027">Amidation</keyword>
<keyword id="KW-0929">Antimicrobial</keyword>
<keyword id="KW-0903">Direct protein sequencing</keyword>
<keyword id="KW-1015">Disulfide bond</keyword>
<keyword id="KW-0558">Oxidation</keyword>
<keyword id="KW-0964">Secreted</keyword>
<organism evidence="2">
    <name type="scientific">Synoicum turgens</name>
    <name type="common">Colonial ascidian</name>
    <dbReference type="NCBI Taxonomy" id="2697470"/>
    <lineage>
        <taxon>Eukaryota</taxon>
        <taxon>Metazoa</taxon>
        <taxon>Chordata</taxon>
        <taxon>Tunicata</taxon>
        <taxon>Ascidiacea</taxon>
        <taxon>Aplousobranchia</taxon>
        <taxon>Polyclinidae</taxon>
        <taxon>Synoicum</taxon>
    </lineage>
</organism>
<sequence>GIKEMLCNMACAQTVCKKSGGPLCDTCQAACKALG</sequence>
<feature type="peptide" id="PRO_0000449796" description="Turgencin-B">
    <location>
        <begin position="1"/>
        <end position="35"/>
    </location>
</feature>
<feature type="modified residue" description="Methionine sulfoxide" evidence="1">
    <location>
        <position position="5"/>
    </location>
</feature>
<feature type="modified residue" description="Methionine sulfoxide" evidence="1">
    <location>
        <position position="9"/>
    </location>
</feature>
<feature type="modified residue" description="Glycine amide" evidence="1">
    <location>
        <position position="35"/>
    </location>
</feature>
<feature type="disulfide bond" evidence="1">
    <location>
        <begin position="7"/>
        <end position="31"/>
    </location>
</feature>
<feature type="disulfide bond" evidence="1">
    <location>
        <begin position="11"/>
        <end position="27"/>
    </location>
</feature>
<feature type="disulfide bond" evidence="1">
    <location>
        <begin position="16"/>
        <end position="24"/>
    </location>
</feature>
<name>TURB_SYNTU</name>
<protein>
    <recommendedName>
        <fullName evidence="2">Turgencin-B</fullName>
    </recommendedName>
</protein>